<proteinExistence type="inferred from homology"/>
<reference key="1">
    <citation type="submission" date="2008-01" db="EMBL/GenBank/DDBJ databases">
        <title>Complete sequence of Shewanella halifaxensis HAW-EB4.</title>
        <authorList>
            <consortium name="US DOE Joint Genome Institute"/>
            <person name="Copeland A."/>
            <person name="Lucas S."/>
            <person name="Lapidus A."/>
            <person name="Glavina del Rio T."/>
            <person name="Dalin E."/>
            <person name="Tice H."/>
            <person name="Bruce D."/>
            <person name="Goodwin L."/>
            <person name="Pitluck S."/>
            <person name="Sims D."/>
            <person name="Brettin T."/>
            <person name="Detter J.C."/>
            <person name="Han C."/>
            <person name="Kuske C.R."/>
            <person name="Schmutz J."/>
            <person name="Larimer F."/>
            <person name="Land M."/>
            <person name="Hauser L."/>
            <person name="Kyrpides N."/>
            <person name="Kim E."/>
            <person name="Zhao J.-S."/>
            <person name="Richardson P."/>
        </authorList>
    </citation>
    <scope>NUCLEOTIDE SEQUENCE [LARGE SCALE GENOMIC DNA]</scope>
    <source>
        <strain>HAW-EB4</strain>
    </source>
</reference>
<accession>B0TVV1</accession>
<keyword id="KW-0030">Aminoacyl-tRNA synthetase</keyword>
<keyword id="KW-0067">ATP-binding</keyword>
<keyword id="KW-0963">Cytoplasm</keyword>
<keyword id="KW-0436">Ligase</keyword>
<keyword id="KW-0547">Nucleotide-binding</keyword>
<keyword id="KW-0648">Protein biosynthesis</keyword>
<feature type="chain" id="PRO_1000076230" description="Arginine--tRNA ligase">
    <location>
        <begin position="1"/>
        <end position="581"/>
    </location>
</feature>
<feature type="short sequence motif" description="'HIGH' region">
    <location>
        <begin position="126"/>
        <end position="136"/>
    </location>
</feature>
<evidence type="ECO:0000255" key="1">
    <source>
        <dbReference type="HAMAP-Rule" id="MF_00123"/>
    </source>
</evidence>
<organism>
    <name type="scientific">Shewanella halifaxensis (strain HAW-EB4)</name>
    <dbReference type="NCBI Taxonomy" id="458817"/>
    <lineage>
        <taxon>Bacteria</taxon>
        <taxon>Pseudomonadati</taxon>
        <taxon>Pseudomonadota</taxon>
        <taxon>Gammaproteobacteria</taxon>
        <taxon>Alteromonadales</taxon>
        <taxon>Shewanellaceae</taxon>
        <taxon>Shewanella</taxon>
    </lineage>
</organism>
<gene>
    <name evidence="1" type="primary">argS</name>
    <name type="ordered locus">Shal_3864</name>
</gene>
<dbReference type="EC" id="6.1.1.19" evidence="1"/>
<dbReference type="EMBL" id="CP000931">
    <property type="protein sequence ID" value="ABZ78404.1"/>
    <property type="molecule type" value="Genomic_DNA"/>
</dbReference>
<dbReference type="RefSeq" id="WP_012278921.1">
    <property type="nucleotide sequence ID" value="NC_010334.1"/>
</dbReference>
<dbReference type="SMR" id="B0TVV1"/>
<dbReference type="STRING" id="458817.Shal_3864"/>
<dbReference type="KEGG" id="shl:Shal_3864"/>
<dbReference type="eggNOG" id="COG0018">
    <property type="taxonomic scope" value="Bacteria"/>
</dbReference>
<dbReference type="HOGENOM" id="CLU_006406_5_1_6"/>
<dbReference type="OrthoDB" id="9803211at2"/>
<dbReference type="Proteomes" id="UP000001317">
    <property type="component" value="Chromosome"/>
</dbReference>
<dbReference type="GO" id="GO:0005737">
    <property type="term" value="C:cytoplasm"/>
    <property type="evidence" value="ECO:0007669"/>
    <property type="project" value="UniProtKB-SubCell"/>
</dbReference>
<dbReference type="GO" id="GO:0004814">
    <property type="term" value="F:arginine-tRNA ligase activity"/>
    <property type="evidence" value="ECO:0007669"/>
    <property type="project" value="UniProtKB-UniRule"/>
</dbReference>
<dbReference type="GO" id="GO:0005524">
    <property type="term" value="F:ATP binding"/>
    <property type="evidence" value="ECO:0007669"/>
    <property type="project" value="UniProtKB-UniRule"/>
</dbReference>
<dbReference type="GO" id="GO:0006420">
    <property type="term" value="P:arginyl-tRNA aminoacylation"/>
    <property type="evidence" value="ECO:0007669"/>
    <property type="project" value="UniProtKB-UniRule"/>
</dbReference>
<dbReference type="CDD" id="cd07956">
    <property type="entry name" value="Anticodon_Ia_Arg"/>
    <property type="match status" value="1"/>
</dbReference>
<dbReference type="CDD" id="cd00671">
    <property type="entry name" value="ArgRS_core"/>
    <property type="match status" value="1"/>
</dbReference>
<dbReference type="FunFam" id="3.30.1360.70:FF:000003">
    <property type="entry name" value="Arginine--tRNA ligase"/>
    <property type="match status" value="1"/>
</dbReference>
<dbReference type="FunFam" id="3.40.50.620:FF:000030">
    <property type="entry name" value="Arginine--tRNA ligase"/>
    <property type="match status" value="1"/>
</dbReference>
<dbReference type="FunFam" id="1.10.730.10:FF:000006">
    <property type="entry name" value="Arginyl-tRNA synthetase 2, mitochondrial"/>
    <property type="match status" value="1"/>
</dbReference>
<dbReference type="Gene3D" id="3.30.1360.70">
    <property type="entry name" value="Arginyl tRNA synthetase N-terminal domain"/>
    <property type="match status" value="1"/>
</dbReference>
<dbReference type="Gene3D" id="3.40.50.620">
    <property type="entry name" value="HUPs"/>
    <property type="match status" value="1"/>
</dbReference>
<dbReference type="Gene3D" id="1.10.730.10">
    <property type="entry name" value="Isoleucyl-tRNA Synthetase, Domain 1"/>
    <property type="match status" value="1"/>
</dbReference>
<dbReference type="HAMAP" id="MF_00123">
    <property type="entry name" value="Arg_tRNA_synth"/>
    <property type="match status" value="1"/>
</dbReference>
<dbReference type="InterPro" id="IPR001412">
    <property type="entry name" value="aa-tRNA-synth_I_CS"/>
</dbReference>
<dbReference type="InterPro" id="IPR001278">
    <property type="entry name" value="Arg-tRNA-ligase"/>
</dbReference>
<dbReference type="InterPro" id="IPR005148">
    <property type="entry name" value="Arg-tRNA-synth_N"/>
</dbReference>
<dbReference type="InterPro" id="IPR036695">
    <property type="entry name" value="Arg-tRNA-synth_N_sf"/>
</dbReference>
<dbReference type="InterPro" id="IPR035684">
    <property type="entry name" value="ArgRS_core"/>
</dbReference>
<dbReference type="InterPro" id="IPR008909">
    <property type="entry name" value="DALR_anticod-bd"/>
</dbReference>
<dbReference type="InterPro" id="IPR014729">
    <property type="entry name" value="Rossmann-like_a/b/a_fold"/>
</dbReference>
<dbReference type="InterPro" id="IPR009080">
    <property type="entry name" value="tRNAsynth_Ia_anticodon-bd"/>
</dbReference>
<dbReference type="NCBIfam" id="TIGR00456">
    <property type="entry name" value="argS"/>
    <property type="match status" value="1"/>
</dbReference>
<dbReference type="PANTHER" id="PTHR11956:SF5">
    <property type="entry name" value="ARGININE--TRNA LIGASE, CYTOPLASMIC"/>
    <property type="match status" value="1"/>
</dbReference>
<dbReference type="PANTHER" id="PTHR11956">
    <property type="entry name" value="ARGINYL-TRNA SYNTHETASE"/>
    <property type="match status" value="1"/>
</dbReference>
<dbReference type="Pfam" id="PF03485">
    <property type="entry name" value="Arg_tRNA_synt_N"/>
    <property type="match status" value="1"/>
</dbReference>
<dbReference type="Pfam" id="PF05746">
    <property type="entry name" value="DALR_1"/>
    <property type="match status" value="1"/>
</dbReference>
<dbReference type="Pfam" id="PF00750">
    <property type="entry name" value="tRNA-synt_1d"/>
    <property type="match status" value="1"/>
</dbReference>
<dbReference type="PRINTS" id="PR01038">
    <property type="entry name" value="TRNASYNTHARG"/>
</dbReference>
<dbReference type="SMART" id="SM01016">
    <property type="entry name" value="Arg_tRNA_synt_N"/>
    <property type="match status" value="1"/>
</dbReference>
<dbReference type="SMART" id="SM00836">
    <property type="entry name" value="DALR_1"/>
    <property type="match status" value="1"/>
</dbReference>
<dbReference type="SUPFAM" id="SSF47323">
    <property type="entry name" value="Anticodon-binding domain of a subclass of class I aminoacyl-tRNA synthetases"/>
    <property type="match status" value="1"/>
</dbReference>
<dbReference type="SUPFAM" id="SSF55190">
    <property type="entry name" value="Arginyl-tRNA synthetase (ArgRS), N-terminal 'additional' domain"/>
    <property type="match status" value="1"/>
</dbReference>
<dbReference type="SUPFAM" id="SSF52374">
    <property type="entry name" value="Nucleotidylyl transferase"/>
    <property type="match status" value="1"/>
</dbReference>
<dbReference type="PROSITE" id="PS00178">
    <property type="entry name" value="AA_TRNA_LIGASE_I"/>
    <property type="match status" value="1"/>
</dbReference>
<protein>
    <recommendedName>
        <fullName evidence="1">Arginine--tRNA ligase</fullName>
        <ecNumber evidence="1">6.1.1.19</ecNumber>
    </recommendedName>
    <alternativeName>
        <fullName evidence="1">Arginyl-tRNA synthetase</fullName>
        <shortName evidence="1">ArgRS</shortName>
    </alternativeName>
</protein>
<sequence length="581" mass="64709">MKSHTQSLLAESLNALKQQGIVPADFEARIQVDRTKDKSHGDFATNLAMMLTKAAGKNPREIAQLLIDNLPESAHVEKVEIAGPGFINFFIDDNALANQLMVALNSDHLGLELPTPQTVVVDYSSPNLAKEMHVGHLRSTIIGDSVVRALEFMGHKVIRQNHVGDWGTQFGMLLAYMEELRAANGEQAKMELSDLENFYRAAKVRFDESAEFATRARKLVVELQSGDEYCNKLWREFNDISLSHCHELYERLGVSLTRADVRGESAYNSDLAQVVADLDAQGLLSESNGAKVVFQDEFKNKEGEPLPVIIQKADGGYLYATSDLAAMRYRSNVLNADRALYFVDLRQALHFQQVFKLAKTAKFVREEMSFEHMGFGTMNGEDGRPFKTRSGGVVKLIDLLKEADTRALDLVRSKNPDMDEAELAEIARVVGIASVKYADLSKNRASDYIFSFEQMLSFEGNTAPYLLYAYTRVAGIFKRAQDVDLSDATIILEHEKEKDLGTKLAQFGEVMTRMVGKGQPHALCGYLFELAGAFSSFYEACPVLAAETEESKKSRLLLSQLTAKTLKQGLNLLGLETLERM</sequence>
<name>SYR_SHEHH</name>
<comment type="catalytic activity">
    <reaction evidence="1">
        <text>tRNA(Arg) + L-arginine + ATP = L-arginyl-tRNA(Arg) + AMP + diphosphate</text>
        <dbReference type="Rhea" id="RHEA:20301"/>
        <dbReference type="Rhea" id="RHEA-COMP:9658"/>
        <dbReference type="Rhea" id="RHEA-COMP:9673"/>
        <dbReference type="ChEBI" id="CHEBI:30616"/>
        <dbReference type="ChEBI" id="CHEBI:32682"/>
        <dbReference type="ChEBI" id="CHEBI:33019"/>
        <dbReference type="ChEBI" id="CHEBI:78442"/>
        <dbReference type="ChEBI" id="CHEBI:78513"/>
        <dbReference type="ChEBI" id="CHEBI:456215"/>
        <dbReference type="EC" id="6.1.1.19"/>
    </reaction>
</comment>
<comment type="subunit">
    <text evidence="1">Monomer.</text>
</comment>
<comment type="subcellular location">
    <subcellularLocation>
        <location evidence="1">Cytoplasm</location>
    </subcellularLocation>
</comment>
<comment type="similarity">
    <text evidence="1">Belongs to the class-I aminoacyl-tRNA synthetase family.</text>
</comment>